<evidence type="ECO:0000250" key="1"/>
<evidence type="ECO:0000250" key="2">
    <source>
        <dbReference type="UniProtKB" id="Q01159"/>
    </source>
</evidence>
<evidence type="ECO:0000256" key="3">
    <source>
        <dbReference type="SAM" id="MobiDB-lite"/>
    </source>
</evidence>
<evidence type="ECO:0000305" key="4"/>
<feature type="chain" id="PRO_0000210098" description="mRNA-capping enzyme subunit alpha">
    <location>
        <begin position="1"/>
        <end position="463"/>
    </location>
</feature>
<feature type="region of interest" description="Disordered" evidence="3">
    <location>
        <begin position="404"/>
        <end position="463"/>
    </location>
</feature>
<feature type="compositionally biased region" description="Acidic residues" evidence="3">
    <location>
        <begin position="441"/>
        <end position="455"/>
    </location>
</feature>
<feature type="active site" description="N6-GMP-lysine intermediate" evidence="1">
    <location>
        <position position="66"/>
    </location>
</feature>
<gene>
    <name type="primary">CEG1</name>
    <name type="ordered locus">AFL107W</name>
</gene>
<comment type="function">
    <text evidence="2">Second step of mRNA capping. Transfer of the GMP moiety of GTP to the 5'-end of RNA via an enzyme-GMP covalent reaction intermediate.</text>
</comment>
<comment type="catalytic activity">
    <reaction evidence="2">
        <text>a 5'-end diphospho-ribonucleoside in mRNA + GTP + H(+) = a 5'-end (5'-triphosphoguanosine)-ribonucleoside in mRNA + diphosphate</text>
        <dbReference type="Rhea" id="RHEA:67012"/>
        <dbReference type="Rhea" id="RHEA-COMP:17165"/>
        <dbReference type="Rhea" id="RHEA-COMP:17166"/>
        <dbReference type="ChEBI" id="CHEBI:15378"/>
        <dbReference type="ChEBI" id="CHEBI:33019"/>
        <dbReference type="ChEBI" id="CHEBI:37565"/>
        <dbReference type="ChEBI" id="CHEBI:167616"/>
        <dbReference type="ChEBI" id="CHEBI:167617"/>
        <dbReference type="EC" id="2.7.7.50"/>
    </reaction>
    <physiologicalReaction direction="left-to-right" evidence="2">
        <dbReference type="Rhea" id="RHEA:67013"/>
    </physiologicalReaction>
</comment>
<comment type="subunit">
    <text evidence="2">Heterodimer. The mRNA-capping enzyme is composed of two separate chains alpha and beta, respectively a mRNA guanylyltransferase and an mRNA 5'-triphosphate monophosphatase.</text>
</comment>
<comment type="subcellular location">
    <subcellularLocation>
        <location evidence="1">Nucleus</location>
    </subcellularLocation>
</comment>
<comment type="similarity">
    <text evidence="4">Belongs to the eukaryotic GTase family.</text>
</comment>
<name>MCE1_EREGS</name>
<accession>Q755D0</accession>
<protein>
    <recommendedName>
        <fullName>mRNA-capping enzyme subunit alpha</fullName>
    </recommendedName>
    <alternativeName>
        <fullName>GTP--RNA guanylyltransferase</fullName>
        <shortName>GTase</shortName>
    </alternativeName>
    <alternativeName>
        <fullName>mRNA guanylyltransferase</fullName>
        <ecNumber evidence="2">2.7.7.50</ecNumber>
    </alternativeName>
</protein>
<sequence>MDSRDAPEVPGIRQPANVTTDLKMIICKLLNSPKPAKTFPGSQPVSFQHVDIEEKLLAQDYYVCEKTDGLRALMLIIMNPVTKEQGCFLIDRENNYYLLNGFRFPRLPRANRKELLETLQDGTLVDGELVVQTNPATRLRELRYLMFDCLAINGRALVQSPTSSRLAHLGKEFYKPYYDLRAYYPDRCATFPFKLSMKHMNFSFDLDRVAGSLDKLPHVSDGLIFTAVDTPYTVGGKDSTLLKWKPEQENTVDFKMILEIPVVEDDTLPKKDRNRFYYNFDVKPSFHLYIWQGGPDVNTRLHDFEQPFSKKELEILHRTYKVFAELQISDEQWAKMKALEQPLNGRIVECAKDQETGEWKFLRFRDDKLNGNHVSVVQKVLESISDSVKLEDLEHMIPRIKARWEERKSKKRTHSSISGPMLPPVAETKAPREATQSRYIDDEDWSDEADDDDEDSLKRARIE</sequence>
<proteinExistence type="inferred from homology"/>
<dbReference type="EC" id="2.7.7.50" evidence="2"/>
<dbReference type="EMBL" id="AE016819">
    <property type="protein sequence ID" value="AAS53267.1"/>
    <property type="molecule type" value="Genomic_DNA"/>
</dbReference>
<dbReference type="RefSeq" id="NP_985443.1">
    <property type="nucleotide sequence ID" value="NM_210797.1"/>
</dbReference>
<dbReference type="SMR" id="Q755D0"/>
<dbReference type="FunCoup" id="Q755D0">
    <property type="interactions" value="468"/>
</dbReference>
<dbReference type="STRING" id="284811.Q755D0"/>
<dbReference type="EnsemblFungi" id="AAS53267">
    <property type="protein sequence ID" value="AAS53267"/>
    <property type="gene ID" value="AGOS_AFL107W"/>
</dbReference>
<dbReference type="GeneID" id="4621670"/>
<dbReference type="KEGG" id="ago:AGOS_AFL107W"/>
<dbReference type="eggNOG" id="KOG2386">
    <property type="taxonomic scope" value="Eukaryota"/>
</dbReference>
<dbReference type="HOGENOM" id="CLU_021710_0_2_1"/>
<dbReference type="InParanoid" id="Q755D0"/>
<dbReference type="OMA" id="KDYYVCE"/>
<dbReference type="OrthoDB" id="200924at2759"/>
<dbReference type="Proteomes" id="UP000000591">
    <property type="component" value="Chromosome VI"/>
</dbReference>
<dbReference type="GO" id="GO:0031533">
    <property type="term" value="C:mRNA capping enzyme complex"/>
    <property type="evidence" value="ECO:0007669"/>
    <property type="project" value="EnsemblFungi"/>
</dbReference>
<dbReference type="GO" id="GO:0005524">
    <property type="term" value="F:ATP binding"/>
    <property type="evidence" value="ECO:0007669"/>
    <property type="project" value="InterPro"/>
</dbReference>
<dbReference type="GO" id="GO:0005525">
    <property type="term" value="F:GTP binding"/>
    <property type="evidence" value="ECO:0007669"/>
    <property type="project" value="UniProtKB-KW"/>
</dbReference>
<dbReference type="GO" id="GO:0004484">
    <property type="term" value="F:mRNA guanylyltransferase activity"/>
    <property type="evidence" value="ECO:0000318"/>
    <property type="project" value="GO_Central"/>
</dbReference>
<dbReference type="GO" id="GO:0099122">
    <property type="term" value="F:RNA polymerase II C-terminal domain binding"/>
    <property type="evidence" value="ECO:0007669"/>
    <property type="project" value="EnsemblFungi"/>
</dbReference>
<dbReference type="GO" id="GO:0006370">
    <property type="term" value="P:7-methylguanosine mRNA capping"/>
    <property type="evidence" value="ECO:0000318"/>
    <property type="project" value="GO_Central"/>
</dbReference>
<dbReference type="GO" id="GO:0045944">
    <property type="term" value="P:positive regulation of transcription by RNA polymerase II"/>
    <property type="evidence" value="ECO:0007669"/>
    <property type="project" value="EnsemblFungi"/>
</dbReference>
<dbReference type="GO" id="GO:0008033">
    <property type="term" value="P:tRNA processing"/>
    <property type="evidence" value="ECO:0007669"/>
    <property type="project" value="EnsemblFungi"/>
</dbReference>
<dbReference type="CDD" id="cd07895">
    <property type="entry name" value="Adenylation_mRNA_capping"/>
    <property type="match status" value="1"/>
</dbReference>
<dbReference type="FunFam" id="2.40.50.140:FF:000253">
    <property type="entry name" value="mRNA-capping enzyme subunit alpha"/>
    <property type="match status" value="1"/>
</dbReference>
<dbReference type="FunFam" id="3.30.470.30:FF:000011">
    <property type="entry name" value="mRNA-capping enzyme subunit alpha"/>
    <property type="match status" value="1"/>
</dbReference>
<dbReference type="Gene3D" id="3.30.470.30">
    <property type="entry name" value="DNA ligase/mRNA capping enzyme"/>
    <property type="match status" value="1"/>
</dbReference>
<dbReference type="Gene3D" id="2.40.50.140">
    <property type="entry name" value="Nucleic acid-binding proteins"/>
    <property type="match status" value="1"/>
</dbReference>
<dbReference type="InterPro" id="IPR001339">
    <property type="entry name" value="mRNA_cap_enzyme_adenylation"/>
</dbReference>
<dbReference type="InterPro" id="IPR017075">
    <property type="entry name" value="mRNA_cap_enzyme_alpha"/>
</dbReference>
<dbReference type="InterPro" id="IPR013846">
    <property type="entry name" value="mRNA_cap_enzyme_C"/>
</dbReference>
<dbReference type="InterPro" id="IPR051029">
    <property type="entry name" value="mRNA_Capping_Enz/RNA_Phosphat"/>
</dbReference>
<dbReference type="InterPro" id="IPR012340">
    <property type="entry name" value="NA-bd_OB-fold"/>
</dbReference>
<dbReference type="PANTHER" id="PTHR10367">
    <property type="entry name" value="MRNA-CAPPING ENZYME"/>
    <property type="match status" value="1"/>
</dbReference>
<dbReference type="PANTHER" id="PTHR10367:SF17">
    <property type="entry name" value="MRNA-CAPPING ENZYME"/>
    <property type="match status" value="1"/>
</dbReference>
<dbReference type="Pfam" id="PF03919">
    <property type="entry name" value="mRNA_cap_C"/>
    <property type="match status" value="1"/>
</dbReference>
<dbReference type="Pfam" id="PF01331">
    <property type="entry name" value="mRNA_cap_enzyme"/>
    <property type="match status" value="1"/>
</dbReference>
<dbReference type="PIRSF" id="PIRSF036959">
    <property type="entry name" value="mRNA_cap_alpha"/>
    <property type="match status" value="1"/>
</dbReference>
<dbReference type="SUPFAM" id="SSF56091">
    <property type="entry name" value="DNA ligase/mRNA capping enzyme, catalytic domain"/>
    <property type="match status" value="1"/>
</dbReference>
<dbReference type="SUPFAM" id="SSF50249">
    <property type="entry name" value="Nucleic acid-binding proteins"/>
    <property type="match status" value="1"/>
</dbReference>
<organism>
    <name type="scientific">Eremothecium gossypii (strain ATCC 10895 / CBS 109.51 / FGSC 9923 / NRRL Y-1056)</name>
    <name type="common">Yeast</name>
    <name type="synonym">Ashbya gossypii</name>
    <dbReference type="NCBI Taxonomy" id="284811"/>
    <lineage>
        <taxon>Eukaryota</taxon>
        <taxon>Fungi</taxon>
        <taxon>Dikarya</taxon>
        <taxon>Ascomycota</taxon>
        <taxon>Saccharomycotina</taxon>
        <taxon>Saccharomycetes</taxon>
        <taxon>Saccharomycetales</taxon>
        <taxon>Saccharomycetaceae</taxon>
        <taxon>Eremothecium</taxon>
    </lineage>
</organism>
<reference key="1">
    <citation type="journal article" date="2004" name="Science">
        <title>The Ashbya gossypii genome as a tool for mapping the ancient Saccharomyces cerevisiae genome.</title>
        <authorList>
            <person name="Dietrich F.S."/>
            <person name="Voegeli S."/>
            <person name="Brachat S."/>
            <person name="Lerch A."/>
            <person name="Gates K."/>
            <person name="Steiner S."/>
            <person name="Mohr C."/>
            <person name="Poehlmann R."/>
            <person name="Luedi P."/>
            <person name="Choi S."/>
            <person name="Wing R.A."/>
            <person name="Flavier A."/>
            <person name="Gaffney T.D."/>
            <person name="Philippsen P."/>
        </authorList>
    </citation>
    <scope>NUCLEOTIDE SEQUENCE [LARGE SCALE GENOMIC DNA]</scope>
    <source>
        <strain>ATCC 10895 / CBS 109.51 / FGSC 9923 / NRRL Y-1056</strain>
    </source>
</reference>
<reference key="2">
    <citation type="journal article" date="2013" name="G3 (Bethesda)">
        <title>Genomes of Ashbya fungi isolated from insects reveal four mating-type loci, numerous translocations, lack of transposons, and distinct gene duplications.</title>
        <authorList>
            <person name="Dietrich F.S."/>
            <person name="Voegeli S."/>
            <person name="Kuo S."/>
            <person name="Philippsen P."/>
        </authorList>
    </citation>
    <scope>GENOME REANNOTATION</scope>
    <source>
        <strain>ATCC 10895 / CBS 109.51 / FGSC 9923 / NRRL Y-1056</strain>
    </source>
</reference>
<keyword id="KW-0342">GTP-binding</keyword>
<keyword id="KW-0506">mRNA capping</keyword>
<keyword id="KW-0507">mRNA processing</keyword>
<keyword id="KW-0547">Nucleotide-binding</keyword>
<keyword id="KW-0548">Nucleotidyltransferase</keyword>
<keyword id="KW-0539">Nucleus</keyword>
<keyword id="KW-1185">Reference proteome</keyword>
<keyword id="KW-0808">Transferase</keyword>